<accession>Q0THH6</accession>
<gene>
    <name evidence="1" type="primary">rnt</name>
    <name type="ordered locus">ECP_1598</name>
</gene>
<reference key="1">
    <citation type="journal article" date="2006" name="Mol. Microbiol.">
        <title>Role of pathogenicity island-associated integrases in the genome plasticity of uropathogenic Escherichia coli strain 536.</title>
        <authorList>
            <person name="Hochhut B."/>
            <person name="Wilde C."/>
            <person name="Balling G."/>
            <person name="Middendorf B."/>
            <person name="Dobrindt U."/>
            <person name="Brzuszkiewicz E."/>
            <person name="Gottschalk G."/>
            <person name="Carniel E."/>
            <person name="Hacker J."/>
        </authorList>
    </citation>
    <scope>NUCLEOTIDE SEQUENCE [LARGE SCALE GENOMIC DNA]</scope>
    <source>
        <strain>536 / UPEC</strain>
    </source>
</reference>
<feature type="chain" id="PRO_1000011391" description="Ribonuclease T">
    <location>
        <begin position="1"/>
        <end position="215"/>
    </location>
</feature>
<feature type="domain" description="Exonuclease" evidence="1">
    <location>
        <begin position="20"/>
        <end position="194"/>
    </location>
</feature>
<feature type="active site" description="Proton donor/acceptor" evidence="1">
    <location>
        <position position="181"/>
    </location>
</feature>
<feature type="binding site" evidence="1">
    <location>
        <position position="23"/>
    </location>
    <ligand>
        <name>Mg(2+)</name>
        <dbReference type="ChEBI" id="CHEBI:18420"/>
        <label>1</label>
        <note>catalytic</note>
    </ligand>
</feature>
<feature type="binding site" evidence="1">
    <location>
        <position position="23"/>
    </location>
    <ligand>
        <name>Mg(2+)</name>
        <dbReference type="ChEBI" id="CHEBI:18420"/>
        <label>2</label>
        <note>catalytic</note>
    </ligand>
</feature>
<feature type="binding site" evidence="1">
    <location>
        <position position="25"/>
    </location>
    <ligand>
        <name>Mg(2+)</name>
        <dbReference type="ChEBI" id="CHEBI:18420"/>
        <label>2</label>
        <note>catalytic</note>
    </ligand>
</feature>
<feature type="binding site" evidence="1">
    <location>
        <position position="181"/>
    </location>
    <ligand>
        <name>Mg(2+)</name>
        <dbReference type="ChEBI" id="CHEBI:18420"/>
        <label>2</label>
        <note>catalytic</note>
    </ligand>
</feature>
<feature type="binding site" evidence="1">
    <location>
        <position position="186"/>
    </location>
    <ligand>
        <name>Mg(2+)</name>
        <dbReference type="ChEBI" id="CHEBI:18420"/>
        <label>2</label>
        <note>catalytic</note>
    </ligand>
</feature>
<feature type="site" description="Important for substrate binding and specificity" evidence="1">
    <location>
        <position position="29"/>
    </location>
</feature>
<feature type="site" description="Important for substrate binding and specificity" evidence="1">
    <location>
        <position position="77"/>
    </location>
</feature>
<feature type="site" description="Important for substrate binding and specificity" evidence="1">
    <location>
        <position position="124"/>
    </location>
</feature>
<feature type="site" description="Important for substrate binding and specificity" evidence="1">
    <location>
        <position position="146"/>
    </location>
</feature>
<proteinExistence type="inferred from homology"/>
<sequence length="215" mass="23533">MSDNAQLTGLCDRFRGFYPVVIDVETAGFNAKTDALLEIAAITLKMDEQGWLMPDTTLHFHVEPFVGANLQPEALAFNGIDPNDPDRGAVSEYEALHEIFKVVRKGIKASGCNRAIMVAHNANFDHSFMMAAAERASLKRNPFHPFATFDTAALAGLALGQTVLSKACQTAGMDFDSTQAHSALYDTERTAVLFCEIVNRWKRLGGWPLPAAEEV</sequence>
<dbReference type="EC" id="3.1.13.-" evidence="1"/>
<dbReference type="EMBL" id="CP000247">
    <property type="protein sequence ID" value="ABG69603.1"/>
    <property type="molecule type" value="Genomic_DNA"/>
</dbReference>
<dbReference type="RefSeq" id="WP_001282281.1">
    <property type="nucleotide sequence ID" value="NC_008253.1"/>
</dbReference>
<dbReference type="SMR" id="Q0THH6"/>
<dbReference type="GeneID" id="93775806"/>
<dbReference type="KEGG" id="ecp:ECP_1598"/>
<dbReference type="HOGENOM" id="CLU_082724_0_0_6"/>
<dbReference type="Proteomes" id="UP000009182">
    <property type="component" value="Chromosome"/>
</dbReference>
<dbReference type="GO" id="GO:0005829">
    <property type="term" value="C:cytosol"/>
    <property type="evidence" value="ECO:0007669"/>
    <property type="project" value="TreeGrafter"/>
</dbReference>
<dbReference type="GO" id="GO:0008408">
    <property type="term" value="F:3'-5' exonuclease activity"/>
    <property type="evidence" value="ECO:0007669"/>
    <property type="project" value="TreeGrafter"/>
</dbReference>
<dbReference type="GO" id="GO:0000287">
    <property type="term" value="F:magnesium ion binding"/>
    <property type="evidence" value="ECO:0007669"/>
    <property type="project" value="UniProtKB-UniRule"/>
</dbReference>
<dbReference type="GO" id="GO:0003676">
    <property type="term" value="F:nucleic acid binding"/>
    <property type="evidence" value="ECO:0007669"/>
    <property type="project" value="InterPro"/>
</dbReference>
<dbReference type="GO" id="GO:0016896">
    <property type="term" value="F:RNA exonuclease activity, producing 5'-phosphomonoesters"/>
    <property type="evidence" value="ECO:0007669"/>
    <property type="project" value="UniProtKB-UniRule"/>
</dbReference>
<dbReference type="GO" id="GO:0045004">
    <property type="term" value="P:DNA replication proofreading"/>
    <property type="evidence" value="ECO:0007669"/>
    <property type="project" value="TreeGrafter"/>
</dbReference>
<dbReference type="GO" id="GO:0008033">
    <property type="term" value="P:tRNA processing"/>
    <property type="evidence" value="ECO:0007669"/>
    <property type="project" value="UniProtKB-KW"/>
</dbReference>
<dbReference type="CDD" id="cd06134">
    <property type="entry name" value="RNaseT"/>
    <property type="match status" value="1"/>
</dbReference>
<dbReference type="FunFam" id="3.30.420.10:FF:000009">
    <property type="entry name" value="Ribonuclease T"/>
    <property type="match status" value="1"/>
</dbReference>
<dbReference type="Gene3D" id="3.30.420.10">
    <property type="entry name" value="Ribonuclease H-like superfamily/Ribonuclease H"/>
    <property type="match status" value="1"/>
</dbReference>
<dbReference type="HAMAP" id="MF_00157">
    <property type="entry name" value="RNase_T"/>
    <property type="match status" value="1"/>
</dbReference>
<dbReference type="InterPro" id="IPR013520">
    <property type="entry name" value="Exonuclease_RNaseT/DNA_pol3"/>
</dbReference>
<dbReference type="InterPro" id="IPR005987">
    <property type="entry name" value="RNase_T"/>
</dbReference>
<dbReference type="InterPro" id="IPR012337">
    <property type="entry name" value="RNaseH-like_sf"/>
</dbReference>
<dbReference type="InterPro" id="IPR036397">
    <property type="entry name" value="RNaseH_sf"/>
</dbReference>
<dbReference type="NCBIfam" id="TIGR01298">
    <property type="entry name" value="RNaseT"/>
    <property type="match status" value="1"/>
</dbReference>
<dbReference type="PANTHER" id="PTHR30231">
    <property type="entry name" value="DNA POLYMERASE III SUBUNIT EPSILON"/>
    <property type="match status" value="1"/>
</dbReference>
<dbReference type="PANTHER" id="PTHR30231:SF2">
    <property type="entry name" value="RIBONUCLEASE T"/>
    <property type="match status" value="1"/>
</dbReference>
<dbReference type="Pfam" id="PF00929">
    <property type="entry name" value="RNase_T"/>
    <property type="match status" value="1"/>
</dbReference>
<dbReference type="SMART" id="SM00479">
    <property type="entry name" value="EXOIII"/>
    <property type="match status" value="1"/>
</dbReference>
<dbReference type="SUPFAM" id="SSF53098">
    <property type="entry name" value="Ribonuclease H-like"/>
    <property type="match status" value="1"/>
</dbReference>
<organism>
    <name type="scientific">Escherichia coli O6:K15:H31 (strain 536 / UPEC)</name>
    <dbReference type="NCBI Taxonomy" id="362663"/>
    <lineage>
        <taxon>Bacteria</taxon>
        <taxon>Pseudomonadati</taxon>
        <taxon>Pseudomonadota</taxon>
        <taxon>Gammaproteobacteria</taxon>
        <taxon>Enterobacterales</taxon>
        <taxon>Enterobacteriaceae</taxon>
        <taxon>Escherichia</taxon>
    </lineage>
</organism>
<name>RNT_ECOL5</name>
<keyword id="KW-0269">Exonuclease</keyword>
<keyword id="KW-0378">Hydrolase</keyword>
<keyword id="KW-0460">Magnesium</keyword>
<keyword id="KW-0479">Metal-binding</keyword>
<keyword id="KW-0540">Nuclease</keyword>
<keyword id="KW-0819">tRNA processing</keyword>
<protein>
    <recommendedName>
        <fullName evidence="1">Ribonuclease T</fullName>
        <ecNumber evidence="1">3.1.13.-</ecNumber>
    </recommendedName>
    <alternativeName>
        <fullName evidence="1">Exoribonuclease T</fullName>
        <shortName evidence="1">RNase T</shortName>
    </alternativeName>
</protein>
<evidence type="ECO:0000255" key="1">
    <source>
        <dbReference type="HAMAP-Rule" id="MF_00157"/>
    </source>
</evidence>
<comment type="function">
    <text evidence="1">Trims short 3' overhangs of a variety of RNA species, leaving a one or two nucleotide 3' overhang. Responsible for the end-turnover of tRNA: specifically removes the terminal AMP residue from uncharged tRNA (tRNA-C-C-A). Also appears to be involved in tRNA biosynthesis.</text>
</comment>
<comment type="cofactor">
    <cofactor evidence="1">
        <name>Mg(2+)</name>
        <dbReference type="ChEBI" id="CHEBI:18420"/>
    </cofactor>
    <text evidence="1">Binds two Mg(2+) per subunit. The active form of the enzyme binds two Mg(2+) ions in its active site. The first Mg(2+) forms only one salt bridge with the protein.</text>
</comment>
<comment type="subunit">
    <text evidence="1">Homodimer.</text>
</comment>
<comment type="similarity">
    <text evidence="1">Belongs to the RNase T family.</text>
</comment>